<sequence>MDIKLVYSTLDPVGVTIKKLGYRFEEINEDVTDFHYENGEAIVIFSRHESKAGIPSLTVHYPGNPSEEIMGGEPKKLGIAYPRLLTSILREIKKIDLNIEKTMEATHHGPTYQNVPVIFVEVGSNETYWTNDTIVKALVDSTIRSIDKVDEIDCEYYISGFGGPHYSRLFTKLADESCIGHVISKHYIDKLDDKVIIQTITNSVNTINKVVIDSLNSKQKERIIASLKKLNNINIEFR</sequence>
<keyword id="KW-0903">Direct protein sequencing</keyword>
<keyword id="KW-0378">Hydrolase</keyword>
<keyword id="KW-0479">Metal-binding</keyword>
<keyword id="KW-1185">Reference proteome</keyword>
<keyword id="KW-0862">Zinc</keyword>
<protein>
    <recommendedName>
        <fullName evidence="1">D-aminoacyl-tRNA deacylase</fullName>
        <ecNumber evidence="1 2">3.1.1.96</ecNumber>
    </recommendedName>
    <alternativeName>
        <fullName>D-tyrosyl-tRNA(Tyr) deacylase</fullName>
    </alternativeName>
</protein>
<comment type="function">
    <text evidence="2">D-aminoacyl-tRNA deacylase with broad substrate specificity. By recycling D-aminoacyl-tRNA to D-amino acids and free tRNA molecules, this enzyme counteracts the toxicity associated with the formation of D-aminoacyl-tRNA entities in vivo. Catalyzes the hydrolysis of D-tyrosyl-tRNA(Tyr).</text>
</comment>
<comment type="catalytic activity">
    <reaction evidence="1 2">
        <text>a D-aminoacyl-tRNA + H2O = a tRNA + a D-alpha-amino acid + H(+)</text>
        <dbReference type="Rhea" id="RHEA:13953"/>
        <dbReference type="Rhea" id="RHEA-COMP:10123"/>
        <dbReference type="Rhea" id="RHEA-COMP:10124"/>
        <dbReference type="ChEBI" id="CHEBI:15377"/>
        <dbReference type="ChEBI" id="CHEBI:15378"/>
        <dbReference type="ChEBI" id="CHEBI:59871"/>
        <dbReference type="ChEBI" id="CHEBI:78442"/>
        <dbReference type="ChEBI" id="CHEBI:79333"/>
        <dbReference type="EC" id="3.1.1.96"/>
    </reaction>
</comment>
<comment type="catalytic activity">
    <reaction evidence="1">
        <text>glycyl-tRNA(Ala) + H2O = tRNA(Ala) + glycine + H(+)</text>
        <dbReference type="Rhea" id="RHEA:53744"/>
        <dbReference type="Rhea" id="RHEA-COMP:9657"/>
        <dbReference type="Rhea" id="RHEA-COMP:13640"/>
        <dbReference type="ChEBI" id="CHEBI:15377"/>
        <dbReference type="ChEBI" id="CHEBI:15378"/>
        <dbReference type="ChEBI" id="CHEBI:57305"/>
        <dbReference type="ChEBI" id="CHEBI:78442"/>
        <dbReference type="ChEBI" id="CHEBI:78522"/>
        <dbReference type="EC" id="3.1.1.96"/>
    </reaction>
</comment>
<comment type="catalytic activity">
    <reaction evidence="2">
        <text>D-tyrosyl-tRNA(Tyr) + H2O = D-tyrosine + tRNA(Tyr)</text>
        <dbReference type="Rhea" id="RHEA:25347"/>
        <dbReference type="Rhea" id="RHEA-COMP:9707"/>
        <dbReference type="Rhea" id="RHEA-COMP:9872"/>
        <dbReference type="ChEBI" id="CHEBI:15377"/>
        <dbReference type="ChEBI" id="CHEBI:58570"/>
        <dbReference type="ChEBI" id="CHEBI:78442"/>
        <dbReference type="ChEBI" id="CHEBI:78723"/>
    </reaction>
</comment>
<comment type="cofactor">
    <cofactor evidence="1">
        <name>Zn(2+)</name>
        <dbReference type="ChEBI" id="CHEBI:29105"/>
    </cofactor>
    <text evidence="1">Binds 2 Zn(2+) ions per subunit.</text>
</comment>
<comment type="subunit">
    <text evidence="1">Monomer.</text>
</comment>
<comment type="similarity">
    <text evidence="1">Belongs to the DtdA deacylase family.</text>
</comment>
<evidence type="ECO:0000255" key="1">
    <source>
        <dbReference type="HAMAP-Rule" id="MF_00562"/>
    </source>
</evidence>
<evidence type="ECO:0000269" key="2">
    <source>
    </source>
</evidence>
<dbReference type="EC" id="3.1.1.96" evidence="1 2"/>
<dbReference type="EMBL" id="AE006641">
    <property type="protein sequence ID" value="AAK42404.1"/>
    <property type="molecule type" value="Genomic_DNA"/>
</dbReference>
<dbReference type="PIR" id="E90393">
    <property type="entry name" value="E90393"/>
</dbReference>
<dbReference type="RefSeq" id="WP_009992037.1">
    <property type="nucleotide sequence ID" value="NC_002754.1"/>
</dbReference>
<dbReference type="SMR" id="Q97WI2"/>
<dbReference type="FunCoup" id="Q97WI2">
    <property type="interactions" value="3"/>
</dbReference>
<dbReference type="STRING" id="273057.SSO2234"/>
<dbReference type="PaxDb" id="273057-SSO2234"/>
<dbReference type="EnsemblBacteria" id="AAK42404">
    <property type="protein sequence ID" value="AAK42404"/>
    <property type="gene ID" value="SSO2234"/>
</dbReference>
<dbReference type="KEGG" id="sso:SSO2234"/>
<dbReference type="PATRIC" id="fig|273057.12.peg.2331"/>
<dbReference type="eggNOG" id="arCOG01616">
    <property type="taxonomic scope" value="Archaea"/>
</dbReference>
<dbReference type="HOGENOM" id="CLU_056464_1_0_2"/>
<dbReference type="InParanoid" id="Q97WI2"/>
<dbReference type="PhylomeDB" id="Q97WI2"/>
<dbReference type="BRENDA" id="3.1.1.96">
    <property type="organism ID" value="6163"/>
</dbReference>
<dbReference type="Proteomes" id="UP000001974">
    <property type="component" value="Chromosome"/>
</dbReference>
<dbReference type="GO" id="GO:0051499">
    <property type="term" value="F:D-aminoacyl-tRNA deacylase activity"/>
    <property type="evidence" value="ECO:0000318"/>
    <property type="project" value="GO_Central"/>
</dbReference>
<dbReference type="GO" id="GO:0051500">
    <property type="term" value="F:D-tyrosyl-tRNA(Tyr) deacylase activity"/>
    <property type="evidence" value="ECO:0007669"/>
    <property type="project" value="RHEA"/>
</dbReference>
<dbReference type="GO" id="GO:0008270">
    <property type="term" value="F:zinc ion binding"/>
    <property type="evidence" value="ECO:0007669"/>
    <property type="project" value="UniProtKB-UniRule"/>
</dbReference>
<dbReference type="GO" id="GO:0019478">
    <property type="term" value="P:D-amino acid catabolic process"/>
    <property type="evidence" value="ECO:0007669"/>
    <property type="project" value="UniProtKB-UniRule"/>
</dbReference>
<dbReference type="FunFam" id="3.40.630.50:FF:000002">
    <property type="entry name" value="D-aminoacyl-tRNA deacylase"/>
    <property type="match status" value="1"/>
</dbReference>
<dbReference type="Gene3D" id="3.40.50.10700">
    <property type="entry name" value="AF0625-like"/>
    <property type="match status" value="1"/>
</dbReference>
<dbReference type="Gene3D" id="3.40.630.50">
    <property type="entry name" value="AF0625-like"/>
    <property type="match status" value="1"/>
</dbReference>
<dbReference type="HAMAP" id="MF_00562">
    <property type="entry name" value="Deacylase_DtdA"/>
    <property type="match status" value="1"/>
</dbReference>
<dbReference type="InterPro" id="IPR018033">
    <property type="entry name" value="Deacylase_DtdA_archaea"/>
</dbReference>
<dbReference type="InterPro" id="IPR007508">
    <property type="entry name" value="DtdA"/>
</dbReference>
<dbReference type="NCBIfam" id="NF003070">
    <property type="entry name" value="PRK03995.1-1"/>
    <property type="match status" value="1"/>
</dbReference>
<dbReference type="PANTHER" id="PTHR34667">
    <property type="entry name" value="D-AMINOACYL-TRNA DEACYLASE"/>
    <property type="match status" value="1"/>
</dbReference>
<dbReference type="PANTHER" id="PTHR34667:SF1">
    <property type="entry name" value="D-AMINOACYL-TRNA DEACYLASE"/>
    <property type="match status" value="1"/>
</dbReference>
<dbReference type="Pfam" id="PF04414">
    <property type="entry name" value="tRNA_deacylase"/>
    <property type="match status" value="1"/>
</dbReference>
<dbReference type="PIRSF" id="PIRSF016210">
    <property type="entry name" value="UCP016210"/>
    <property type="match status" value="1"/>
</dbReference>
<dbReference type="SUPFAM" id="SSF142535">
    <property type="entry name" value="AF0625-like"/>
    <property type="match status" value="1"/>
</dbReference>
<accession>Q97WI2</accession>
<proteinExistence type="evidence at protein level"/>
<feature type="chain" id="PRO_0000158974" description="D-aminoacyl-tRNA deacylase">
    <location>
        <begin position="1"/>
        <end position="238"/>
    </location>
</feature>
<organism>
    <name type="scientific">Saccharolobus solfataricus (strain ATCC 35092 / DSM 1617 / JCM 11322 / P2)</name>
    <name type="common">Sulfolobus solfataricus</name>
    <dbReference type="NCBI Taxonomy" id="273057"/>
    <lineage>
        <taxon>Archaea</taxon>
        <taxon>Thermoproteota</taxon>
        <taxon>Thermoprotei</taxon>
        <taxon>Sulfolobales</taxon>
        <taxon>Sulfolobaceae</taxon>
        <taxon>Saccharolobus</taxon>
    </lineage>
</organism>
<name>DTDA_SACS2</name>
<reference key="1">
    <citation type="journal article" date="2001" name="Proc. Natl. Acad. Sci. U.S.A.">
        <title>The complete genome of the crenarchaeon Sulfolobus solfataricus P2.</title>
        <authorList>
            <person name="She Q."/>
            <person name="Singh R.K."/>
            <person name="Confalonieri F."/>
            <person name="Zivanovic Y."/>
            <person name="Allard G."/>
            <person name="Awayez M.J."/>
            <person name="Chan-Weiher C.C.-Y."/>
            <person name="Clausen I.G."/>
            <person name="Curtis B.A."/>
            <person name="De Moors A."/>
            <person name="Erauso G."/>
            <person name="Fletcher C."/>
            <person name="Gordon P.M.K."/>
            <person name="Heikamp-de Jong I."/>
            <person name="Jeffries A.C."/>
            <person name="Kozera C.J."/>
            <person name="Medina N."/>
            <person name="Peng X."/>
            <person name="Thi-Ngoc H.P."/>
            <person name="Redder P."/>
            <person name="Schenk M.E."/>
            <person name="Theriault C."/>
            <person name="Tolstrup N."/>
            <person name="Charlebois R.L."/>
            <person name="Doolittle W.F."/>
            <person name="Duguet M."/>
            <person name="Gaasterland T."/>
            <person name="Garrett R.A."/>
            <person name="Ragan M.A."/>
            <person name="Sensen C.W."/>
            <person name="Van der Oost J."/>
        </authorList>
    </citation>
    <scope>NUCLEOTIDE SEQUENCE [LARGE SCALE GENOMIC DNA]</scope>
    <source>
        <strain>ATCC 35092 / DSM 1617 / JCM 11322 / P2</strain>
    </source>
</reference>
<reference key="2">
    <citation type="journal article" date="2006" name="J. Biol. Chem.">
        <title>Identification in archaea of a novel D-Tyr-tRNATyr deacylase.</title>
        <authorList>
            <person name="Ferri-Fioni M.-L."/>
            <person name="Fromant M."/>
            <person name="Bouin A.-P."/>
            <person name="Aubard C."/>
            <person name="Lazennec C."/>
            <person name="Plateau P."/>
            <person name="Blanquet S."/>
        </authorList>
    </citation>
    <scope>PROTEIN SEQUENCE OF 1-5</scope>
    <scope>FUNCTION</scope>
    <scope>CATALYTIC ACTIVITY</scope>
</reference>
<gene>
    <name evidence="1" type="primary">dtdA</name>
    <name type="ordered locus">SSO2234</name>
</gene>